<sequence length="426" mass="47446">MLYPRALLPAAVALASLVLAVPLEERQLAFDFNNQKVRGVNLGGWFVLEPWITPSIFQQWANGGDVIDEYSYTAALGKDEAFTRLNNHWATWITEEDFAEIASMGLNHVRIPIGYWALVAIPNDPYVQGQLSYVDRAIDWARKNGLKVMLDLHGAPGSQNGFDNSGRTGTIAWQSGDNVPNTLRAIQALAERYAPQTDVVTAIELLNEPANWGNDLSQIKKFYYDGWGNVRTQGQTAVTIHDAFLDPRSWNGFMNSEAGVNNVILDTHIYQVFSQNEVAMKPCAHVQTACSSIDKIKPTDKWTIVGEWTGAQTDCAKWLNGLGKGARYDGTLPGHSEGYYGSCDKKYEGTVDSMLPVDKTNLQYFVEAQLDAYESHTGWFFWTWKTESAPEWHFQNLTRAGLIPQPLDSRKVPSQCGTSQCLVPGN</sequence>
<name>EXG_BLUGR</name>
<organism>
    <name type="scientific">Blumeria graminis</name>
    <name type="common">Powdery mildew</name>
    <name type="synonym">Oidium monilioides</name>
    <dbReference type="NCBI Taxonomy" id="34373"/>
    <lineage>
        <taxon>Eukaryota</taxon>
        <taxon>Fungi</taxon>
        <taxon>Dikarya</taxon>
        <taxon>Ascomycota</taxon>
        <taxon>Pezizomycotina</taxon>
        <taxon>Leotiomycetes</taxon>
        <taxon>Erysiphales</taxon>
        <taxon>Erysiphaceae</taxon>
        <taxon>Blumeria</taxon>
    </lineage>
</organism>
<reference key="1">
    <citation type="submission" date="2000-11" db="EMBL/GenBank/DDBJ databases">
        <title>A 1,3-beta glucanase from Blumeria graminis related to the fungal cell wall.</title>
        <authorList>
            <person name="Zhang Z."/>
            <person name="Gurr S.J."/>
        </authorList>
    </citation>
    <scope>NUCLEOTIDE SEQUENCE [GENOMIC DNA]</scope>
</reference>
<evidence type="ECO:0000250" key="1"/>
<evidence type="ECO:0000255" key="2"/>
<evidence type="ECO:0000305" key="3"/>
<protein>
    <recommendedName>
        <fullName>Glucan 1,3-beta-glucosidase</fullName>
        <ecNumber>3.2.1.58</ecNumber>
    </recommendedName>
    <alternativeName>
        <fullName>Exo-1,3-beta-glucanase</fullName>
    </alternativeName>
</protein>
<dbReference type="EC" id="3.2.1.58"/>
<dbReference type="EMBL" id="AF317734">
    <property type="protein sequence ID" value="AAL26905.1"/>
    <property type="molecule type" value="Genomic_DNA"/>
</dbReference>
<dbReference type="SMR" id="Q96V64"/>
<dbReference type="CAZy" id="GH5">
    <property type="family name" value="Glycoside Hydrolase Family 5"/>
</dbReference>
<dbReference type="EnsemblFungi" id="BLGH_02382-mRNA-1">
    <property type="protein sequence ID" value="BLGH_02382-mRNA-1"/>
    <property type="gene ID" value="BLGH_02382"/>
</dbReference>
<dbReference type="VEuPathDB" id="FungiDB:BGT96224V316_LOCUS3035"/>
<dbReference type="VEuPathDB" id="FungiDB:BGTH12_LOCUS2767"/>
<dbReference type="OMA" id="GWDMQDL"/>
<dbReference type="GO" id="GO:0009986">
    <property type="term" value="C:cell surface"/>
    <property type="evidence" value="ECO:0007669"/>
    <property type="project" value="TreeGrafter"/>
</dbReference>
<dbReference type="GO" id="GO:0005576">
    <property type="term" value="C:extracellular region"/>
    <property type="evidence" value="ECO:0007669"/>
    <property type="project" value="UniProtKB-SubCell"/>
</dbReference>
<dbReference type="GO" id="GO:0004338">
    <property type="term" value="F:glucan exo-1,3-beta-glucosidase activity"/>
    <property type="evidence" value="ECO:0007669"/>
    <property type="project" value="UniProtKB-EC"/>
</dbReference>
<dbReference type="GO" id="GO:0071555">
    <property type="term" value="P:cell wall organization"/>
    <property type="evidence" value="ECO:0007669"/>
    <property type="project" value="UniProtKB-KW"/>
</dbReference>
<dbReference type="GO" id="GO:0009251">
    <property type="term" value="P:glucan catabolic process"/>
    <property type="evidence" value="ECO:0007669"/>
    <property type="project" value="TreeGrafter"/>
</dbReference>
<dbReference type="FunFam" id="3.20.20.80:FF:000033">
    <property type="entry name" value="Glucan 1,3-beta-glucosidase A"/>
    <property type="match status" value="1"/>
</dbReference>
<dbReference type="Gene3D" id="3.20.20.80">
    <property type="entry name" value="Glycosidases"/>
    <property type="match status" value="1"/>
</dbReference>
<dbReference type="InterPro" id="IPR001547">
    <property type="entry name" value="Glyco_hydro_5"/>
</dbReference>
<dbReference type="InterPro" id="IPR017853">
    <property type="entry name" value="Glycoside_hydrolase_SF"/>
</dbReference>
<dbReference type="InterPro" id="IPR050386">
    <property type="entry name" value="Glycosyl_hydrolase_5"/>
</dbReference>
<dbReference type="PANTHER" id="PTHR31297:SF1">
    <property type="entry name" value="GLUCAN 1,3-BETA-GLUCOSIDASE I_II-RELATED"/>
    <property type="match status" value="1"/>
</dbReference>
<dbReference type="PANTHER" id="PTHR31297">
    <property type="entry name" value="GLUCAN ENDO-1,6-BETA-GLUCOSIDASE B"/>
    <property type="match status" value="1"/>
</dbReference>
<dbReference type="Pfam" id="PF00150">
    <property type="entry name" value="Cellulase"/>
    <property type="match status" value="1"/>
</dbReference>
<dbReference type="SUPFAM" id="SSF51445">
    <property type="entry name" value="(Trans)glycosidases"/>
    <property type="match status" value="1"/>
</dbReference>
<proteinExistence type="inferred from homology"/>
<accession>Q96V64</accession>
<feature type="signal peptide" evidence="2">
    <location>
        <begin position="1"/>
        <end position="20"/>
    </location>
</feature>
<feature type="chain" id="PRO_0000007877" description="Glucan 1,3-beta-glucosidase">
    <location>
        <begin position="21"/>
        <end position="426"/>
    </location>
</feature>
<feature type="active site" description="Proton donor" evidence="1">
    <location>
        <position position="208"/>
    </location>
</feature>
<feature type="active site" description="Nucleophile" evidence="1">
    <location>
        <position position="307"/>
    </location>
</feature>
<feature type="disulfide bond" evidence="1">
    <location>
        <begin position="290"/>
        <end position="416"/>
    </location>
</feature>
<feature type="disulfide bond" evidence="1">
    <location>
        <begin position="315"/>
        <end position="343"/>
    </location>
</feature>
<comment type="function">
    <text evidence="1">Beta-glucanases participate in the metabolism of beta-glucan, the main structural component of the cell wall. It could also function biosynthetically as a transglycosylase (By similarity).</text>
</comment>
<comment type="catalytic activity">
    <reaction>
        <text>Successive hydrolysis of beta-D-glucose units from the non-reducing ends of (1-&gt;3)-beta-D-glucans, releasing alpha-glucose.</text>
        <dbReference type="EC" id="3.2.1.58"/>
    </reaction>
</comment>
<comment type="subcellular location">
    <subcellularLocation>
        <location evidence="3">Secreted</location>
    </subcellularLocation>
</comment>
<comment type="similarity">
    <text evidence="3">Belongs to the glycosyl hydrolase 5 (cellulase A) family.</text>
</comment>
<keyword id="KW-0961">Cell wall biogenesis/degradation</keyword>
<keyword id="KW-1015">Disulfide bond</keyword>
<keyword id="KW-0326">Glycosidase</keyword>
<keyword id="KW-0378">Hydrolase</keyword>
<keyword id="KW-0964">Secreted</keyword>
<keyword id="KW-0732">Signal</keyword>
<keyword id="KW-0865">Zymogen</keyword>